<reference key="1">
    <citation type="journal article" date="2011" name="J. Bacteriol.">
        <title>Complete genome sequence of the plant growth-promoting endophyte Burkholderia phytofirmans strain PsJN.</title>
        <authorList>
            <person name="Weilharter A."/>
            <person name="Mitter B."/>
            <person name="Shin M.V."/>
            <person name="Chain P.S."/>
            <person name="Nowak J."/>
            <person name="Sessitsch A."/>
        </authorList>
    </citation>
    <scope>NUCLEOTIDE SEQUENCE [LARGE SCALE GENOMIC DNA]</scope>
    <source>
        <strain>DSM 17436 / LMG 22146 / PsJN</strain>
    </source>
</reference>
<proteinExistence type="inferred from homology"/>
<gene>
    <name evidence="1" type="primary">rplY</name>
    <name evidence="1" type="synonym">ctc</name>
    <name type="ordered locus">Bphyt_0584</name>
</gene>
<feature type="chain" id="PRO_1000142499" description="Large ribosomal subunit protein bL25">
    <location>
        <begin position="1"/>
        <end position="206"/>
    </location>
</feature>
<name>RL25_PARPJ</name>
<dbReference type="EMBL" id="CP001052">
    <property type="protein sequence ID" value="ACD15009.1"/>
    <property type="molecule type" value="Genomic_DNA"/>
</dbReference>
<dbReference type="RefSeq" id="WP_012431647.1">
    <property type="nucleotide sequence ID" value="NC_010681.1"/>
</dbReference>
<dbReference type="SMR" id="B2SXG4"/>
<dbReference type="STRING" id="398527.Bphyt_0584"/>
<dbReference type="KEGG" id="bpy:Bphyt_0584"/>
<dbReference type="eggNOG" id="COG1825">
    <property type="taxonomic scope" value="Bacteria"/>
</dbReference>
<dbReference type="HOGENOM" id="CLU_075939_0_1_4"/>
<dbReference type="OrthoDB" id="9806411at2"/>
<dbReference type="Proteomes" id="UP000001739">
    <property type="component" value="Chromosome 1"/>
</dbReference>
<dbReference type="GO" id="GO:0022625">
    <property type="term" value="C:cytosolic large ribosomal subunit"/>
    <property type="evidence" value="ECO:0007669"/>
    <property type="project" value="TreeGrafter"/>
</dbReference>
<dbReference type="GO" id="GO:0008097">
    <property type="term" value="F:5S rRNA binding"/>
    <property type="evidence" value="ECO:0007669"/>
    <property type="project" value="InterPro"/>
</dbReference>
<dbReference type="GO" id="GO:0003735">
    <property type="term" value="F:structural constituent of ribosome"/>
    <property type="evidence" value="ECO:0007669"/>
    <property type="project" value="InterPro"/>
</dbReference>
<dbReference type="GO" id="GO:0006412">
    <property type="term" value="P:translation"/>
    <property type="evidence" value="ECO:0007669"/>
    <property type="project" value="UniProtKB-UniRule"/>
</dbReference>
<dbReference type="CDD" id="cd00495">
    <property type="entry name" value="Ribosomal_L25_TL5_CTC"/>
    <property type="match status" value="1"/>
</dbReference>
<dbReference type="Gene3D" id="2.170.120.20">
    <property type="entry name" value="Ribosomal protein L25, beta domain"/>
    <property type="match status" value="1"/>
</dbReference>
<dbReference type="Gene3D" id="2.40.240.10">
    <property type="entry name" value="Ribosomal Protein L25, Chain P"/>
    <property type="match status" value="1"/>
</dbReference>
<dbReference type="HAMAP" id="MF_01334">
    <property type="entry name" value="Ribosomal_bL25_CTC"/>
    <property type="match status" value="1"/>
</dbReference>
<dbReference type="InterPro" id="IPR020056">
    <property type="entry name" value="Rbsml_bL25/Gln-tRNA_synth_N"/>
</dbReference>
<dbReference type="InterPro" id="IPR011035">
    <property type="entry name" value="Ribosomal_bL25/Gln-tRNA_synth"/>
</dbReference>
<dbReference type="InterPro" id="IPR020057">
    <property type="entry name" value="Ribosomal_bL25_b-dom"/>
</dbReference>
<dbReference type="InterPro" id="IPR037121">
    <property type="entry name" value="Ribosomal_bL25_C"/>
</dbReference>
<dbReference type="InterPro" id="IPR001021">
    <property type="entry name" value="Ribosomal_bL25_long"/>
</dbReference>
<dbReference type="InterPro" id="IPR029751">
    <property type="entry name" value="Ribosomal_L25_dom"/>
</dbReference>
<dbReference type="InterPro" id="IPR020930">
    <property type="entry name" value="Ribosomal_uL5_bac-type"/>
</dbReference>
<dbReference type="NCBIfam" id="TIGR00731">
    <property type="entry name" value="bL25_bact_ctc"/>
    <property type="match status" value="1"/>
</dbReference>
<dbReference type="NCBIfam" id="NF004128">
    <property type="entry name" value="PRK05618.1-2"/>
    <property type="match status" value="1"/>
</dbReference>
<dbReference type="NCBIfam" id="NF004130">
    <property type="entry name" value="PRK05618.1-5"/>
    <property type="match status" value="1"/>
</dbReference>
<dbReference type="NCBIfam" id="NF004612">
    <property type="entry name" value="PRK05943.1"/>
    <property type="match status" value="1"/>
</dbReference>
<dbReference type="PANTHER" id="PTHR33284">
    <property type="entry name" value="RIBOSOMAL PROTEIN L25/GLN-TRNA SYNTHETASE, ANTI-CODON-BINDING DOMAIN-CONTAINING PROTEIN"/>
    <property type="match status" value="1"/>
</dbReference>
<dbReference type="PANTHER" id="PTHR33284:SF1">
    <property type="entry name" value="RIBOSOMAL PROTEIN L25_GLN-TRNA SYNTHETASE, ANTI-CODON-BINDING DOMAIN-CONTAINING PROTEIN"/>
    <property type="match status" value="1"/>
</dbReference>
<dbReference type="Pfam" id="PF01386">
    <property type="entry name" value="Ribosomal_L25p"/>
    <property type="match status" value="1"/>
</dbReference>
<dbReference type="Pfam" id="PF14693">
    <property type="entry name" value="Ribosomal_TL5_C"/>
    <property type="match status" value="1"/>
</dbReference>
<dbReference type="SUPFAM" id="SSF50715">
    <property type="entry name" value="Ribosomal protein L25-like"/>
    <property type="match status" value="1"/>
</dbReference>
<accession>B2SXG4</accession>
<sequence>MKVVAFERSLQGTGASRRLRNSGKTPGIVYGAGAETQLVELDHNALWHALKKEVFHSSILDLEVAGKSQQVLLRDVQYHPFRQLVLHVDFQRVDAKKKLHTKVPLHFMNQESNPAVKLSSAVISHVINEIEIECLPSALPEFLEVDLATIEAGHSVHAKDIKLPAGVSLVAHVEAENPVVAAATIPAGAIAEGDAAAAGEGETPAA</sequence>
<protein>
    <recommendedName>
        <fullName evidence="1">Large ribosomal subunit protein bL25</fullName>
    </recommendedName>
    <alternativeName>
        <fullName evidence="2">50S ribosomal protein L25</fullName>
    </alternativeName>
    <alternativeName>
        <fullName evidence="1">General stress protein CTC</fullName>
    </alternativeName>
</protein>
<comment type="function">
    <text evidence="1">This is one of the proteins that binds to the 5S RNA in the ribosome where it forms part of the central protuberance.</text>
</comment>
<comment type="subunit">
    <text evidence="1">Part of the 50S ribosomal subunit; part of the 5S rRNA/L5/L18/L25 subcomplex. Contacts the 5S rRNA. Binds to the 5S rRNA independently of L5 and L18.</text>
</comment>
<comment type="similarity">
    <text evidence="1">Belongs to the bacterial ribosomal protein bL25 family. CTC subfamily.</text>
</comment>
<organism>
    <name type="scientific">Paraburkholderia phytofirmans (strain DSM 17436 / LMG 22146 / PsJN)</name>
    <name type="common">Burkholderia phytofirmans</name>
    <dbReference type="NCBI Taxonomy" id="398527"/>
    <lineage>
        <taxon>Bacteria</taxon>
        <taxon>Pseudomonadati</taxon>
        <taxon>Pseudomonadota</taxon>
        <taxon>Betaproteobacteria</taxon>
        <taxon>Burkholderiales</taxon>
        <taxon>Burkholderiaceae</taxon>
        <taxon>Paraburkholderia</taxon>
    </lineage>
</organism>
<keyword id="KW-0687">Ribonucleoprotein</keyword>
<keyword id="KW-0689">Ribosomal protein</keyword>
<keyword id="KW-0694">RNA-binding</keyword>
<keyword id="KW-0699">rRNA-binding</keyword>
<evidence type="ECO:0000255" key="1">
    <source>
        <dbReference type="HAMAP-Rule" id="MF_01334"/>
    </source>
</evidence>
<evidence type="ECO:0000305" key="2"/>